<keyword id="KW-1185">Reference proteome</keyword>
<keyword id="KW-0687">Ribonucleoprotein</keyword>
<keyword id="KW-0689">Ribosomal protein</keyword>
<proteinExistence type="inferred from homology"/>
<sequence>MSNKLKVTLIKSMNGRLQAHQQCVRGLGLRRIHQSCEVQDTPENRGMINKVAYLLKVEEVL</sequence>
<accession>A5EXA0</accession>
<gene>
    <name evidence="1" type="primary">rpmD</name>
    <name type="ordered locus">DNO_1257</name>
</gene>
<feature type="chain" id="PRO_0000347098" description="Large ribosomal subunit protein uL30">
    <location>
        <begin position="1"/>
        <end position="61"/>
    </location>
</feature>
<dbReference type="EMBL" id="CP000513">
    <property type="protein sequence ID" value="ABQ14120.1"/>
    <property type="molecule type" value="Genomic_DNA"/>
</dbReference>
<dbReference type="RefSeq" id="WP_012031552.1">
    <property type="nucleotide sequence ID" value="NC_009446.1"/>
</dbReference>
<dbReference type="SMR" id="A5EXA0"/>
<dbReference type="STRING" id="246195.DNO_1257"/>
<dbReference type="KEGG" id="dno:DNO_1257"/>
<dbReference type="eggNOG" id="COG1841">
    <property type="taxonomic scope" value="Bacteria"/>
</dbReference>
<dbReference type="HOGENOM" id="CLU_131047_1_4_6"/>
<dbReference type="OrthoDB" id="9812790at2"/>
<dbReference type="Proteomes" id="UP000000248">
    <property type="component" value="Chromosome"/>
</dbReference>
<dbReference type="GO" id="GO:0022625">
    <property type="term" value="C:cytosolic large ribosomal subunit"/>
    <property type="evidence" value="ECO:0007669"/>
    <property type="project" value="TreeGrafter"/>
</dbReference>
<dbReference type="GO" id="GO:0003735">
    <property type="term" value="F:structural constituent of ribosome"/>
    <property type="evidence" value="ECO:0007669"/>
    <property type="project" value="InterPro"/>
</dbReference>
<dbReference type="GO" id="GO:0006412">
    <property type="term" value="P:translation"/>
    <property type="evidence" value="ECO:0007669"/>
    <property type="project" value="UniProtKB-UniRule"/>
</dbReference>
<dbReference type="CDD" id="cd01658">
    <property type="entry name" value="Ribosomal_L30"/>
    <property type="match status" value="1"/>
</dbReference>
<dbReference type="FunFam" id="3.30.1390.20:FF:000001">
    <property type="entry name" value="50S ribosomal protein L30"/>
    <property type="match status" value="1"/>
</dbReference>
<dbReference type="Gene3D" id="3.30.1390.20">
    <property type="entry name" value="Ribosomal protein L30, ferredoxin-like fold domain"/>
    <property type="match status" value="1"/>
</dbReference>
<dbReference type="HAMAP" id="MF_01371_B">
    <property type="entry name" value="Ribosomal_uL30_B"/>
    <property type="match status" value="1"/>
</dbReference>
<dbReference type="InterPro" id="IPR036919">
    <property type="entry name" value="Ribo_uL30_ferredoxin-like_sf"/>
</dbReference>
<dbReference type="InterPro" id="IPR005996">
    <property type="entry name" value="Ribosomal_uL30_bac-type"/>
</dbReference>
<dbReference type="InterPro" id="IPR016082">
    <property type="entry name" value="Ribosomal_uL30_ferredoxin-like"/>
</dbReference>
<dbReference type="NCBIfam" id="TIGR01308">
    <property type="entry name" value="rpmD_bact"/>
    <property type="match status" value="1"/>
</dbReference>
<dbReference type="PANTHER" id="PTHR15892:SF2">
    <property type="entry name" value="LARGE RIBOSOMAL SUBUNIT PROTEIN UL30M"/>
    <property type="match status" value="1"/>
</dbReference>
<dbReference type="PANTHER" id="PTHR15892">
    <property type="entry name" value="MITOCHONDRIAL RIBOSOMAL PROTEIN L30"/>
    <property type="match status" value="1"/>
</dbReference>
<dbReference type="Pfam" id="PF00327">
    <property type="entry name" value="Ribosomal_L30"/>
    <property type="match status" value="1"/>
</dbReference>
<dbReference type="PIRSF" id="PIRSF002211">
    <property type="entry name" value="Ribosomal_L30_bac-type"/>
    <property type="match status" value="1"/>
</dbReference>
<dbReference type="SUPFAM" id="SSF55129">
    <property type="entry name" value="Ribosomal protein L30p/L7e"/>
    <property type="match status" value="1"/>
</dbReference>
<organism>
    <name type="scientific">Dichelobacter nodosus (strain VCS1703A)</name>
    <dbReference type="NCBI Taxonomy" id="246195"/>
    <lineage>
        <taxon>Bacteria</taxon>
        <taxon>Pseudomonadati</taxon>
        <taxon>Pseudomonadota</taxon>
        <taxon>Gammaproteobacteria</taxon>
        <taxon>Cardiobacteriales</taxon>
        <taxon>Cardiobacteriaceae</taxon>
        <taxon>Dichelobacter</taxon>
    </lineage>
</organism>
<reference key="1">
    <citation type="journal article" date="2007" name="Nat. Biotechnol.">
        <title>Genome sequence and identification of candidate vaccine antigens from the animal pathogen Dichelobacter nodosus.</title>
        <authorList>
            <person name="Myers G.S.A."/>
            <person name="Parker D."/>
            <person name="Al-Hasani K."/>
            <person name="Kennan R.M."/>
            <person name="Seemann T."/>
            <person name="Ren Q."/>
            <person name="Badger J.H."/>
            <person name="Selengut J.D."/>
            <person name="Deboy R.T."/>
            <person name="Tettelin H."/>
            <person name="Boyce J.D."/>
            <person name="McCarl V.P."/>
            <person name="Han X."/>
            <person name="Nelson W.C."/>
            <person name="Madupu R."/>
            <person name="Mohamoud Y."/>
            <person name="Holley T."/>
            <person name="Fedorova N."/>
            <person name="Khouri H."/>
            <person name="Bottomley S.P."/>
            <person name="Whittington R.J."/>
            <person name="Adler B."/>
            <person name="Songer J.G."/>
            <person name="Rood J.I."/>
            <person name="Paulsen I.T."/>
        </authorList>
    </citation>
    <scope>NUCLEOTIDE SEQUENCE [LARGE SCALE GENOMIC DNA]</scope>
    <source>
        <strain>VCS1703A</strain>
    </source>
</reference>
<protein>
    <recommendedName>
        <fullName evidence="1">Large ribosomal subunit protein uL30</fullName>
    </recommendedName>
    <alternativeName>
        <fullName evidence="2">50S ribosomal protein L30</fullName>
    </alternativeName>
</protein>
<name>RL30_DICNV</name>
<comment type="subunit">
    <text evidence="1">Part of the 50S ribosomal subunit.</text>
</comment>
<comment type="similarity">
    <text evidence="1">Belongs to the universal ribosomal protein uL30 family.</text>
</comment>
<evidence type="ECO:0000255" key="1">
    <source>
        <dbReference type="HAMAP-Rule" id="MF_01371"/>
    </source>
</evidence>
<evidence type="ECO:0000305" key="2"/>